<name>KRUP_DROME</name>
<dbReference type="EMBL" id="X03414">
    <property type="protein sequence ID" value="CAA27148.1"/>
    <property type="status" value="ALT_FRAME"/>
    <property type="molecule type" value="Genomic_DNA"/>
</dbReference>
<dbReference type="EMBL" id="AE013599">
    <property type="protein sequence ID" value="AAF47321.1"/>
    <property type="molecule type" value="Genomic_DNA"/>
</dbReference>
<dbReference type="EMBL" id="AY071280">
    <property type="protein sequence ID" value="AAL48902.1"/>
    <property type="molecule type" value="mRNA"/>
</dbReference>
<dbReference type="PIR" id="A24566">
    <property type="entry name" value="TWFF"/>
</dbReference>
<dbReference type="RefSeq" id="NP_001261181.1">
    <property type="nucleotide sequence ID" value="NM_001274252.1"/>
</dbReference>
<dbReference type="RefSeq" id="NP_523867.1">
    <property type="nucleotide sequence ID" value="NM_079143.3"/>
</dbReference>
<dbReference type="SMR" id="P07247"/>
<dbReference type="BioGRID" id="63578">
    <property type="interactions" value="42"/>
</dbReference>
<dbReference type="FunCoup" id="P07247">
    <property type="interactions" value="20"/>
</dbReference>
<dbReference type="IntAct" id="P07247">
    <property type="interactions" value="4"/>
</dbReference>
<dbReference type="STRING" id="7227.FBpp0305365"/>
<dbReference type="GlyGen" id="P07247">
    <property type="glycosylation" value="1 site"/>
</dbReference>
<dbReference type="iPTMnet" id="P07247"/>
<dbReference type="PaxDb" id="7227-FBpp0305365"/>
<dbReference type="EnsemblMetazoa" id="FBtr0072449">
    <property type="protein sequence ID" value="FBpp0072351"/>
    <property type="gene ID" value="FBgn0001325"/>
</dbReference>
<dbReference type="EnsemblMetazoa" id="FBtr0333162">
    <property type="protein sequence ID" value="FBpp0305365"/>
    <property type="gene ID" value="FBgn0001325"/>
</dbReference>
<dbReference type="GeneID" id="38012"/>
<dbReference type="KEGG" id="dme:Dmel_CG3340"/>
<dbReference type="AGR" id="FB:FBgn0001325"/>
<dbReference type="CTD" id="38012"/>
<dbReference type="FlyBase" id="FBgn0001325">
    <property type="gene designation" value="Kr"/>
</dbReference>
<dbReference type="VEuPathDB" id="VectorBase:FBgn0001325"/>
<dbReference type="eggNOG" id="KOG1721">
    <property type="taxonomic scope" value="Eukaryota"/>
</dbReference>
<dbReference type="HOGENOM" id="CLU_030522_1_0_1"/>
<dbReference type="InParanoid" id="P07247"/>
<dbReference type="OMA" id="AMYPAMG"/>
<dbReference type="OrthoDB" id="654211at2759"/>
<dbReference type="PhylomeDB" id="P07247"/>
<dbReference type="SignaLink" id="P07247"/>
<dbReference type="BioGRID-ORCS" id="38012">
    <property type="hits" value="0 hits in 1 CRISPR screen"/>
</dbReference>
<dbReference type="GenomeRNAi" id="38012"/>
<dbReference type="PRO" id="PR:P07247"/>
<dbReference type="Proteomes" id="UP000000803">
    <property type="component" value="Chromosome 2R"/>
</dbReference>
<dbReference type="Bgee" id="FBgn0001325">
    <property type="expression patterns" value="Expressed in head sensillum and 67 other cell types or tissues"/>
</dbReference>
<dbReference type="ExpressionAtlas" id="P07247">
    <property type="expression patterns" value="baseline and differential"/>
</dbReference>
<dbReference type="GO" id="GO:0005634">
    <property type="term" value="C:nucleus"/>
    <property type="evidence" value="ECO:0000314"/>
    <property type="project" value="FlyBase"/>
</dbReference>
<dbReference type="GO" id="GO:0003700">
    <property type="term" value="F:DNA-binding transcription factor activity"/>
    <property type="evidence" value="ECO:0000314"/>
    <property type="project" value="FlyBase"/>
</dbReference>
<dbReference type="GO" id="GO:0000981">
    <property type="term" value="F:DNA-binding transcription factor activity, RNA polymerase II-specific"/>
    <property type="evidence" value="ECO:0000314"/>
    <property type="project" value="FlyBase"/>
</dbReference>
<dbReference type="GO" id="GO:0000978">
    <property type="term" value="F:RNA polymerase II cis-regulatory region sequence-specific DNA binding"/>
    <property type="evidence" value="ECO:0000318"/>
    <property type="project" value="GO_Central"/>
</dbReference>
<dbReference type="GO" id="GO:0043565">
    <property type="term" value="F:sequence-specific DNA binding"/>
    <property type="evidence" value="ECO:0000314"/>
    <property type="project" value="FlyBase"/>
</dbReference>
<dbReference type="GO" id="GO:0008270">
    <property type="term" value="F:zinc ion binding"/>
    <property type="evidence" value="ECO:0007669"/>
    <property type="project" value="UniProtKB-KW"/>
</dbReference>
<dbReference type="GO" id="GO:0007411">
    <property type="term" value="P:axon guidance"/>
    <property type="evidence" value="ECO:0000315"/>
    <property type="project" value="FlyBase"/>
</dbReference>
<dbReference type="GO" id="GO:0048749">
    <property type="term" value="P:compound eye development"/>
    <property type="evidence" value="ECO:0000315"/>
    <property type="project" value="FlyBase"/>
</dbReference>
<dbReference type="GO" id="GO:0031507">
    <property type="term" value="P:heterochromatin formation"/>
    <property type="evidence" value="ECO:0000315"/>
    <property type="project" value="FlyBase"/>
</dbReference>
<dbReference type="GO" id="GO:0061332">
    <property type="term" value="P:Malpighian tubule bud morphogenesis"/>
    <property type="evidence" value="ECO:0000316"/>
    <property type="project" value="FlyBase"/>
</dbReference>
<dbReference type="GO" id="GO:0007517">
    <property type="term" value="P:muscle organ development"/>
    <property type="evidence" value="ECO:0000304"/>
    <property type="project" value="FlyBase"/>
</dbReference>
<dbReference type="GO" id="GO:0045892">
    <property type="term" value="P:negative regulation of DNA-templated transcription"/>
    <property type="evidence" value="ECO:0000314"/>
    <property type="project" value="FlyBase"/>
</dbReference>
<dbReference type="GO" id="GO:0000122">
    <property type="term" value="P:negative regulation of transcription by RNA polymerase II"/>
    <property type="evidence" value="ECO:0000314"/>
    <property type="project" value="FlyBase"/>
</dbReference>
<dbReference type="GO" id="GO:0007400">
    <property type="term" value="P:neuroblast fate determination"/>
    <property type="evidence" value="ECO:0000315"/>
    <property type="project" value="FlyBase"/>
</dbReference>
<dbReference type="GO" id="GO:0040034">
    <property type="term" value="P:regulation of development, heterochronic"/>
    <property type="evidence" value="ECO:0000304"/>
    <property type="project" value="FlyBase"/>
</dbReference>
<dbReference type="GO" id="GO:0035206">
    <property type="term" value="P:regulation of hemocyte proliferation"/>
    <property type="evidence" value="ECO:0000315"/>
    <property type="project" value="FlyBase"/>
</dbReference>
<dbReference type="GO" id="GO:2000177">
    <property type="term" value="P:regulation of neural precursor cell proliferation"/>
    <property type="evidence" value="ECO:0000315"/>
    <property type="project" value="FlyBase"/>
</dbReference>
<dbReference type="GO" id="GO:0050767">
    <property type="term" value="P:regulation of neurogenesis"/>
    <property type="evidence" value="ECO:0000315"/>
    <property type="project" value="FlyBase"/>
</dbReference>
<dbReference type="GO" id="GO:0006357">
    <property type="term" value="P:regulation of transcription by RNA polymerase II"/>
    <property type="evidence" value="ECO:0000318"/>
    <property type="project" value="GO_Central"/>
</dbReference>
<dbReference type="GO" id="GO:0035290">
    <property type="term" value="P:trunk segmentation"/>
    <property type="evidence" value="ECO:0000304"/>
    <property type="project" value="FlyBase"/>
</dbReference>
<dbReference type="GO" id="GO:0007354">
    <property type="term" value="P:zygotic determination of anterior/posterior axis, embryo"/>
    <property type="evidence" value="ECO:0000304"/>
    <property type="project" value="FlyBase"/>
</dbReference>
<dbReference type="FunFam" id="3.30.160.60:FF:002373">
    <property type="entry name" value="Protein krueppel"/>
    <property type="match status" value="1"/>
</dbReference>
<dbReference type="FunFam" id="3.30.160.60:FF:000100">
    <property type="entry name" value="Zinc finger 45-like"/>
    <property type="match status" value="1"/>
</dbReference>
<dbReference type="FunFam" id="3.30.160.60:FF:000912">
    <property type="entry name" value="Zinc finger protein 660"/>
    <property type="match status" value="1"/>
</dbReference>
<dbReference type="FunFam" id="3.30.160.60:FF:000624">
    <property type="entry name" value="zinc finger protein 697"/>
    <property type="match status" value="1"/>
</dbReference>
<dbReference type="Gene3D" id="3.30.160.60">
    <property type="entry name" value="Classic Zinc Finger"/>
    <property type="match status" value="5"/>
</dbReference>
<dbReference type="InterPro" id="IPR050331">
    <property type="entry name" value="Zinc_finger"/>
</dbReference>
<dbReference type="InterPro" id="IPR036236">
    <property type="entry name" value="Znf_C2H2_sf"/>
</dbReference>
<dbReference type="InterPro" id="IPR013087">
    <property type="entry name" value="Znf_C2H2_type"/>
</dbReference>
<dbReference type="PANTHER" id="PTHR16515:SF66">
    <property type="entry name" value="C2H2-TYPE DOMAIN-CONTAINING PROTEIN"/>
    <property type="match status" value="1"/>
</dbReference>
<dbReference type="PANTHER" id="PTHR16515">
    <property type="entry name" value="PR DOMAIN ZINC FINGER PROTEIN"/>
    <property type="match status" value="1"/>
</dbReference>
<dbReference type="Pfam" id="PF00096">
    <property type="entry name" value="zf-C2H2"/>
    <property type="match status" value="4"/>
</dbReference>
<dbReference type="SMART" id="SM00355">
    <property type="entry name" value="ZnF_C2H2"/>
    <property type="match status" value="4"/>
</dbReference>
<dbReference type="SUPFAM" id="SSF57667">
    <property type="entry name" value="beta-beta-alpha zinc fingers"/>
    <property type="match status" value="3"/>
</dbReference>
<dbReference type="PROSITE" id="PS00028">
    <property type="entry name" value="ZINC_FINGER_C2H2_1"/>
    <property type="match status" value="4"/>
</dbReference>
<dbReference type="PROSITE" id="PS50157">
    <property type="entry name" value="ZINC_FINGER_C2H2_2"/>
    <property type="match status" value="5"/>
</dbReference>
<sequence>MSISMLQDAQTRTLAAALAGIKQEDVHLDRSMSLSPPMSANTSATSAAAIYPAMGLQQAAAASAFGMLSPTQLLAANRQAAAFMAQLPMSTLANTLFPHNPAALFGAWAAQQSLPPQGTHLHSPPASPHSPLSTPLGSGKHPLNSPNSTPQHHEPAKKARKLSVKKEFQTEISMSVNDMYHTSGGPISPPSSGSSPNSTHDGAGGNAGCVGVSKDPSRDKSFTCKICSRSFGYKHVLQNHERTHTGEKPFECPECHKRFTRDHHLKTHMRLHTGEKPYHCSHCDRQFVQVANLRRHLRVHTGERPYTCEICDGKFSDSNQLKSHMLVHNGEKPFECERCHMKFRRRHHLMNHKCGIQSPPTPALSPAMSGDYPVAISAIAIEASTNRFAAMCATYGGSNESVDMEKATPEDDGPLDLSEDGASSVDGHCSNIARRKAQDIRRVFRLPPPQIPHVPSDMPEQTEPEDLSMHSPRSIGSHEQTDDIDLYDLDDAPASYMGHQQH</sequence>
<protein>
    <recommendedName>
        <fullName>Protein krueppel</fullName>
    </recommendedName>
</protein>
<organism>
    <name type="scientific">Drosophila melanogaster</name>
    <name type="common">Fruit fly</name>
    <dbReference type="NCBI Taxonomy" id="7227"/>
    <lineage>
        <taxon>Eukaryota</taxon>
        <taxon>Metazoa</taxon>
        <taxon>Ecdysozoa</taxon>
        <taxon>Arthropoda</taxon>
        <taxon>Hexapoda</taxon>
        <taxon>Insecta</taxon>
        <taxon>Pterygota</taxon>
        <taxon>Neoptera</taxon>
        <taxon>Endopterygota</taxon>
        <taxon>Diptera</taxon>
        <taxon>Brachycera</taxon>
        <taxon>Muscomorpha</taxon>
        <taxon>Ephydroidea</taxon>
        <taxon>Drosophilidae</taxon>
        <taxon>Drosophila</taxon>
        <taxon>Sophophora</taxon>
    </lineage>
</organism>
<keyword id="KW-0217">Developmental protein</keyword>
<keyword id="KW-0238">DNA-binding</keyword>
<keyword id="KW-0302">Gap protein</keyword>
<keyword id="KW-0479">Metal-binding</keyword>
<keyword id="KW-0539">Nucleus</keyword>
<keyword id="KW-0597">Phosphoprotein</keyword>
<keyword id="KW-1185">Reference proteome</keyword>
<keyword id="KW-0677">Repeat</keyword>
<keyword id="KW-0862">Zinc</keyword>
<keyword id="KW-0863">Zinc-finger</keyword>
<comment type="function">
    <text>Krueppel is a gap class segmentation protein. It is involved in the segmentation of the embryo and in the differentiation of the Malpighian tubules.</text>
</comment>
<comment type="subcellular location">
    <subcellularLocation>
        <location evidence="4">Nucleus</location>
    </subcellularLocation>
    <text>Chromatin associated.</text>
</comment>
<comment type="similarity">
    <text evidence="5">Belongs to the krueppel C2H2-type zinc-finger protein family.</text>
</comment>
<comment type="sequence caution" evidence="5">
    <conflict type="frameshift">
        <sequence resource="EMBL-CDS" id="CAA27148"/>
    </conflict>
</comment>
<evidence type="ECO:0000255" key="1">
    <source>
        <dbReference type="PROSITE-ProRule" id="PRU00042"/>
    </source>
</evidence>
<evidence type="ECO:0000256" key="2">
    <source>
        <dbReference type="SAM" id="MobiDB-lite"/>
    </source>
</evidence>
<evidence type="ECO:0000269" key="3">
    <source>
    </source>
</evidence>
<evidence type="ECO:0000269" key="4">
    <source>
    </source>
</evidence>
<evidence type="ECO:0000305" key="5"/>
<accession>P07247</accession>
<accession>Q8SYW3</accession>
<accession>Q9W0V9</accession>
<reference key="1">
    <citation type="journal article" date="1986" name="Nature">
        <title>Structural homology of the product of the Drosophila Krueppel gene with Xenopus transcription factor IIIA.</title>
        <authorList>
            <person name="Rosenberg U.B."/>
            <person name="Schroeder C."/>
            <person name="Preiss A."/>
            <person name="Kienlin A."/>
            <person name="Cote S."/>
            <person name="Riede I."/>
            <person name="Jaeckle H."/>
        </authorList>
    </citation>
    <scope>NUCLEOTIDE SEQUENCE [GENOMIC DNA]</scope>
</reference>
<reference key="2">
    <citation type="journal article" date="2000" name="Science">
        <title>The genome sequence of Drosophila melanogaster.</title>
        <authorList>
            <person name="Adams M.D."/>
            <person name="Celniker S.E."/>
            <person name="Holt R.A."/>
            <person name="Evans C.A."/>
            <person name="Gocayne J.D."/>
            <person name="Amanatides P.G."/>
            <person name="Scherer S.E."/>
            <person name="Li P.W."/>
            <person name="Hoskins R.A."/>
            <person name="Galle R.F."/>
            <person name="George R.A."/>
            <person name="Lewis S.E."/>
            <person name="Richards S."/>
            <person name="Ashburner M."/>
            <person name="Henderson S.N."/>
            <person name="Sutton G.G."/>
            <person name="Wortman J.R."/>
            <person name="Yandell M.D."/>
            <person name="Zhang Q."/>
            <person name="Chen L.X."/>
            <person name="Brandon R.C."/>
            <person name="Rogers Y.-H.C."/>
            <person name="Blazej R.G."/>
            <person name="Champe M."/>
            <person name="Pfeiffer B.D."/>
            <person name="Wan K.H."/>
            <person name="Doyle C."/>
            <person name="Baxter E.G."/>
            <person name="Helt G."/>
            <person name="Nelson C.R."/>
            <person name="Miklos G.L.G."/>
            <person name="Abril J.F."/>
            <person name="Agbayani A."/>
            <person name="An H.-J."/>
            <person name="Andrews-Pfannkoch C."/>
            <person name="Baldwin D."/>
            <person name="Ballew R.M."/>
            <person name="Basu A."/>
            <person name="Baxendale J."/>
            <person name="Bayraktaroglu L."/>
            <person name="Beasley E.M."/>
            <person name="Beeson K.Y."/>
            <person name="Benos P.V."/>
            <person name="Berman B.P."/>
            <person name="Bhandari D."/>
            <person name="Bolshakov S."/>
            <person name="Borkova D."/>
            <person name="Botchan M.R."/>
            <person name="Bouck J."/>
            <person name="Brokstein P."/>
            <person name="Brottier P."/>
            <person name="Burtis K.C."/>
            <person name="Busam D.A."/>
            <person name="Butler H."/>
            <person name="Cadieu E."/>
            <person name="Center A."/>
            <person name="Chandra I."/>
            <person name="Cherry J.M."/>
            <person name="Cawley S."/>
            <person name="Dahlke C."/>
            <person name="Davenport L.B."/>
            <person name="Davies P."/>
            <person name="de Pablos B."/>
            <person name="Delcher A."/>
            <person name="Deng Z."/>
            <person name="Mays A.D."/>
            <person name="Dew I."/>
            <person name="Dietz S.M."/>
            <person name="Dodson K."/>
            <person name="Doup L.E."/>
            <person name="Downes M."/>
            <person name="Dugan-Rocha S."/>
            <person name="Dunkov B.C."/>
            <person name="Dunn P."/>
            <person name="Durbin K.J."/>
            <person name="Evangelista C.C."/>
            <person name="Ferraz C."/>
            <person name="Ferriera S."/>
            <person name="Fleischmann W."/>
            <person name="Fosler C."/>
            <person name="Gabrielian A.E."/>
            <person name="Garg N.S."/>
            <person name="Gelbart W.M."/>
            <person name="Glasser K."/>
            <person name="Glodek A."/>
            <person name="Gong F."/>
            <person name="Gorrell J.H."/>
            <person name="Gu Z."/>
            <person name="Guan P."/>
            <person name="Harris M."/>
            <person name="Harris N.L."/>
            <person name="Harvey D.A."/>
            <person name="Heiman T.J."/>
            <person name="Hernandez J.R."/>
            <person name="Houck J."/>
            <person name="Hostin D."/>
            <person name="Houston K.A."/>
            <person name="Howland T.J."/>
            <person name="Wei M.-H."/>
            <person name="Ibegwam C."/>
            <person name="Jalali M."/>
            <person name="Kalush F."/>
            <person name="Karpen G.H."/>
            <person name="Ke Z."/>
            <person name="Kennison J.A."/>
            <person name="Ketchum K.A."/>
            <person name="Kimmel B.E."/>
            <person name="Kodira C.D."/>
            <person name="Kraft C.L."/>
            <person name="Kravitz S."/>
            <person name="Kulp D."/>
            <person name="Lai Z."/>
            <person name="Lasko P."/>
            <person name="Lei Y."/>
            <person name="Levitsky A.A."/>
            <person name="Li J.H."/>
            <person name="Li Z."/>
            <person name="Liang Y."/>
            <person name="Lin X."/>
            <person name="Liu X."/>
            <person name="Mattei B."/>
            <person name="McIntosh T.C."/>
            <person name="McLeod M.P."/>
            <person name="McPherson D."/>
            <person name="Merkulov G."/>
            <person name="Milshina N.V."/>
            <person name="Mobarry C."/>
            <person name="Morris J."/>
            <person name="Moshrefi A."/>
            <person name="Mount S.M."/>
            <person name="Moy M."/>
            <person name="Murphy B."/>
            <person name="Murphy L."/>
            <person name="Muzny D.M."/>
            <person name="Nelson D.L."/>
            <person name="Nelson D.R."/>
            <person name="Nelson K.A."/>
            <person name="Nixon K."/>
            <person name="Nusskern D.R."/>
            <person name="Pacleb J.M."/>
            <person name="Palazzolo M."/>
            <person name="Pittman G.S."/>
            <person name="Pan S."/>
            <person name="Pollard J."/>
            <person name="Puri V."/>
            <person name="Reese M.G."/>
            <person name="Reinert K."/>
            <person name="Remington K."/>
            <person name="Saunders R.D.C."/>
            <person name="Scheeler F."/>
            <person name="Shen H."/>
            <person name="Shue B.C."/>
            <person name="Siden-Kiamos I."/>
            <person name="Simpson M."/>
            <person name="Skupski M.P."/>
            <person name="Smith T.J."/>
            <person name="Spier E."/>
            <person name="Spradling A.C."/>
            <person name="Stapleton M."/>
            <person name="Strong R."/>
            <person name="Sun E."/>
            <person name="Svirskas R."/>
            <person name="Tector C."/>
            <person name="Turner R."/>
            <person name="Venter E."/>
            <person name="Wang A.H."/>
            <person name="Wang X."/>
            <person name="Wang Z.-Y."/>
            <person name="Wassarman D.A."/>
            <person name="Weinstock G.M."/>
            <person name="Weissenbach J."/>
            <person name="Williams S.M."/>
            <person name="Woodage T."/>
            <person name="Worley K.C."/>
            <person name="Wu D."/>
            <person name="Yang S."/>
            <person name="Yao Q.A."/>
            <person name="Ye J."/>
            <person name="Yeh R.-F."/>
            <person name="Zaveri J.S."/>
            <person name="Zhan M."/>
            <person name="Zhang G."/>
            <person name="Zhao Q."/>
            <person name="Zheng L."/>
            <person name="Zheng X.H."/>
            <person name="Zhong F.N."/>
            <person name="Zhong W."/>
            <person name="Zhou X."/>
            <person name="Zhu S.C."/>
            <person name="Zhu X."/>
            <person name="Smith H.O."/>
            <person name="Gibbs R.A."/>
            <person name="Myers E.W."/>
            <person name="Rubin G.M."/>
            <person name="Venter J.C."/>
        </authorList>
    </citation>
    <scope>NUCLEOTIDE SEQUENCE [LARGE SCALE GENOMIC DNA]</scope>
    <source>
        <strain>Berkeley</strain>
    </source>
</reference>
<reference key="3">
    <citation type="journal article" date="2002" name="Genome Biol.">
        <title>Annotation of the Drosophila melanogaster euchromatic genome: a systematic review.</title>
        <authorList>
            <person name="Misra S."/>
            <person name="Crosby M.A."/>
            <person name="Mungall C.J."/>
            <person name="Matthews B.B."/>
            <person name="Campbell K.S."/>
            <person name="Hradecky P."/>
            <person name="Huang Y."/>
            <person name="Kaminker J.S."/>
            <person name="Millburn G.H."/>
            <person name="Prochnik S.E."/>
            <person name="Smith C.D."/>
            <person name="Tupy J.L."/>
            <person name="Whitfield E.J."/>
            <person name="Bayraktaroglu L."/>
            <person name="Berman B.P."/>
            <person name="Bettencourt B.R."/>
            <person name="Celniker S.E."/>
            <person name="de Grey A.D.N.J."/>
            <person name="Drysdale R.A."/>
            <person name="Harris N.L."/>
            <person name="Richter J."/>
            <person name="Russo S."/>
            <person name="Schroeder A.J."/>
            <person name="Shu S.Q."/>
            <person name="Stapleton M."/>
            <person name="Yamada C."/>
            <person name="Ashburner M."/>
            <person name="Gelbart W.M."/>
            <person name="Rubin G.M."/>
            <person name="Lewis S.E."/>
        </authorList>
    </citation>
    <scope>GENOME REANNOTATION</scope>
    <source>
        <strain>Berkeley</strain>
    </source>
</reference>
<reference key="4">
    <citation type="journal article" date="2002" name="Genome Biol.">
        <title>A Drosophila full-length cDNA resource.</title>
        <authorList>
            <person name="Stapleton M."/>
            <person name="Carlson J.W."/>
            <person name="Brokstein P."/>
            <person name="Yu C."/>
            <person name="Champe M."/>
            <person name="George R.A."/>
            <person name="Guarin H."/>
            <person name="Kronmiller B."/>
            <person name="Pacleb J.M."/>
            <person name="Park S."/>
            <person name="Wan K.H."/>
            <person name="Rubin G.M."/>
            <person name="Celniker S.E."/>
        </authorList>
    </citation>
    <scope>NUCLEOTIDE SEQUENCE [LARGE SCALE MRNA]</scope>
    <source>
        <strain>Berkeley</strain>
        <tissue>Embryo</tissue>
    </source>
</reference>
<reference key="5">
    <citation type="journal article" date="1992" name="Proc. Natl. Acad. Sci. U.S.A.">
        <title>Evolutionary conservation pattern of zinc-finger domains of Drosophila segmentation genes.</title>
        <authorList>
            <person name="Sommer R.J."/>
            <person name="Retzlaff M."/>
            <person name="Goerlich K."/>
            <person name="Sander K."/>
            <person name="Tautz D."/>
        </authorList>
    </citation>
    <scope>NUCLEOTIDE SEQUENCE OF 240-314</scope>
</reference>
<reference key="6">
    <citation type="journal article" date="1987" name="Proc. Natl. Acad. Sci. U.S.A.">
        <title>Drosophila Kruppel gene product produced in a baculovirus expression system is a nuclear phosphoprotein that binds to DNA.</title>
        <authorList>
            <person name="Ollo R."/>
            <person name="Maniatis T."/>
        </authorList>
    </citation>
    <scope>SUBCELLULAR LOCATION</scope>
    <scope>DNA-BINDING</scope>
    <scope>PHOSPHORYLATION</scope>
</reference>
<reference key="7">
    <citation type="journal article" date="2008" name="J. Proteome Res.">
        <title>Phosphoproteome analysis of Drosophila melanogaster embryos.</title>
        <authorList>
            <person name="Zhai B."/>
            <person name="Villen J."/>
            <person name="Beausoleil S.A."/>
            <person name="Mintseris J."/>
            <person name="Gygi S.P."/>
        </authorList>
    </citation>
    <scope>PHOSPHORYLATION [LARGE SCALE ANALYSIS] AT SER-468; SER-471 AND SER-477</scope>
    <scope>IDENTIFICATION BY MASS SPECTROMETRY</scope>
    <source>
        <tissue>Embryo</tissue>
    </source>
</reference>
<feature type="chain" id="PRO_0000046992" description="Protein krueppel">
    <location>
        <begin position="1"/>
        <end position="502"/>
    </location>
</feature>
<feature type="zinc finger region" description="C2H2-type 1" evidence="1">
    <location>
        <begin position="222"/>
        <end position="244"/>
    </location>
</feature>
<feature type="zinc finger region" description="C2H2-type 2" evidence="1">
    <location>
        <begin position="250"/>
        <end position="272"/>
    </location>
</feature>
<feature type="zinc finger region" description="C2H2-type 3" evidence="1">
    <location>
        <begin position="278"/>
        <end position="300"/>
    </location>
</feature>
<feature type="zinc finger region" description="C2H2-type 4" evidence="1">
    <location>
        <begin position="306"/>
        <end position="328"/>
    </location>
</feature>
<feature type="zinc finger region" description="C2H2-type 5" evidence="1">
    <location>
        <begin position="334"/>
        <end position="354"/>
    </location>
</feature>
<feature type="region of interest" description="Disordered" evidence="2">
    <location>
        <begin position="115"/>
        <end position="164"/>
    </location>
</feature>
<feature type="region of interest" description="Disordered" evidence="2">
    <location>
        <begin position="178"/>
        <end position="202"/>
    </location>
</feature>
<feature type="region of interest" description="Disordered" evidence="2">
    <location>
        <begin position="399"/>
        <end position="427"/>
    </location>
</feature>
<feature type="region of interest" description="Disordered" evidence="2">
    <location>
        <begin position="445"/>
        <end position="502"/>
    </location>
</feature>
<feature type="compositionally biased region" description="Low complexity" evidence="2">
    <location>
        <begin position="119"/>
        <end position="136"/>
    </location>
</feature>
<feature type="compositionally biased region" description="Low complexity" evidence="2">
    <location>
        <begin position="183"/>
        <end position="198"/>
    </location>
</feature>
<feature type="compositionally biased region" description="Acidic residues" evidence="2">
    <location>
        <begin position="410"/>
        <end position="419"/>
    </location>
</feature>
<feature type="compositionally biased region" description="Acidic residues" evidence="2">
    <location>
        <begin position="482"/>
        <end position="491"/>
    </location>
</feature>
<feature type="modified residue" description="Phosphoserine" evidence="3">
    <location>
        <position position="468"/>
    </location>
</feature>
<feature type="modified residue" description="Phosphoserine" evidence="3">
    <location>
        <position position="471"/>
    </location>
</feature>
<feature type="modified residue" description="Phosphoserine" evidence="3">
    <location>
        <position position="477"/>
    </location>
</feature>
<feature type="sequence conflict" description="In Ref. 4; AAL48902." evidence="5" ref="4">
    <original>HE</original>
    <variation>Q</variation>
    <location>
        <begin position="153"/>
        <end position="154"/>
    </location>
</feature>
<feature type="sequence conflict" description="In Ref. 1; CAA27148." evidence="5" ref="1">
    <original>HT</original>
    <variation>LS</variation>
    <location>
        <begin position="181"/>
        <end position="182"/>
    </location>
</feature>
<feature type="sequence conflict" description="In Ref. 1; CAA27148." evidence="5" ref="1">
    <original>H</original>
    <variation>D</variation>
    <location>
        <position position="256"/>
    </location>
</feature>
<feature type="sequence conflict" description="In Ref. 1; CAA27148." evidence="5" ref="1">
    <original>N</original>
    <variation>T</variation>
    <location>
        <position position="329"/>
    </location>
</feature>
<feature type="sequence conflict" description="In Ref. 1; CAA27148." evidence="5" ref="1">
    <original>G</original>
    <variation>S</variation>
    <location>
        <position position="397"/>
    </location>
</feature>
<feature type="sequence conflict" description="In Ref. 1." evidence="5" ref="1">
    <original>C</original>
    <variation>Y</variation>
    <location>
        <position position="429"/>
    </location>
</feature>
<proteinExistence type="evidence at protein level"/>
<gene>
    <name type="primary">Kr</name>
    <name type="ORF">CG3340</name>
</gene>